<name>GLP1_MORAL</name>
<organism>
    <name type="scientific">Morus alba</name>
    <name type="common">White mulberry</name>
    <dbReference type="NCBI Taxonomy" id="3498"/>
    <lineage>
        <taxon>Eukaryota</taxon>
        <taxon>Viridiplantae</taxon>
        <taxon>Streptophyta</taxon>
        <taxon>Embryophyta</taxon>
        <taxon>Tracheophyta</taxon>
        <taxon>Spermatophyta</taxon>
        <taxon>Magnoliopsida</taxon>
        <taxon>eudicotyledons</taxon>
        <taxon>Gunneridae</taxon>
        <taxon>Pentapetalae</taxon>
        <taxon>rosids</taxon>
        <taxon>fabids</taxon>
        <taxon>Rosales</taxon>
        <taxon>Moraceae</taxon>
        <taxon>Moreae</taxon>
        <taxon>Morus</taxon>
    </lineage>
</organism>
<proteinExistence type="evidence at protein level"/>
<keyword id="KW-0044">Antibiotic</keyword>
<keyword id="KW-0929">Antimicrobial</keyword>
<keyword id="KW-0052">Apoplast</keyword>
<keyword id="KW-0903">Direct protein sequencing</keyword>
<keyword id="KW-1015">Disulfide bond</keyword>
<keyword id="KW-0295">Fungicide</keyword>
<keyword id="KW-0325">Glycoprotein</keyword>
<keyword id="KW-0464">Manganese</keyword>
<keyword id="KW-0479">Metal-binding</keyword>
<keyword id="KW-0675">Receptor</keyword>
<keyword id="KW-0964">Secreted</keyword>
<keyword id="KW-0732">Signal</keyword>
<accession>L8BRS3</accession>
<accession>B3EWH8</accession>
<protein>
    <recommendedName>
        <fullName evidence="5">Germin-like protein</fullName>
        <shortName evidence="5">Ma-Glp</shortName>
    </recommendedName>
</protein>
<comment type="function">
    <text evidence="2 4">Has antibacterial activity against B.subtilis (MIC=5 ug), B.cereus (MIC=50 ug), A.hydrophila (MIC=2.5 ug), S.marcescens(MIC=10 ug), S.enterica (MIC=10 ug), P.entomophila (MIC=2.5 ug) and P.rhodesiae (MIC=10 ug). Has antifungal activity against F.solani KACC 40384 and F.oxysporum KACC 40032. Probably has no oxalate oxidase activity even if the active site is conserved.</text>
</comment>
<comment type="biophysicochemical properties">
    <phDependence>
        <text evidence="4">Antibacterial activity retained between pH 7 and 10.</text>
    </phDependence>
    <temperatureDependence>
        <text evidence="4">Antibacterial activity retained between 10 and 70 degrees Celsius.</text>
    </temperatureDependence>
</comment>
<comment type="subcellular location">
    <subcellularLocation>
        <location evidence="1">Secreted</location>
        <location evidence="1">Extracellular space</location>
        <location evidence="1">Apoplast</location>
    </subcellularLocation>
</comment>
<comment type="mass spectrometry" mass="21285.0" method="MALDI" evidence="4"/>
<comment type="similarity">
    <text evidence="3">Belongs to the germin family.</text>
</comment>
<sequence length="209" mass="21888">MIVPIFFLFSLLFSSSHGAIQDFCVADYSAPQGPAGYSCKNPAKVTVDNFVYSGLGITGNTTNLIKAAVTTAFDNQFPGVNGLGISLARPDLAPGGVIPFHTHPGASEIIIVIEGSLCAAFVSSDNKVYLKSLKKGDTMIFPSGLLHFQLNAGKNNALFFVAFNSPNPGLQLVDYALFGNDLATELVAAASFLDPAEIKRLKAVLGGSG</sequence>
<dbReference type="EMBL" id="HE805964">
    <property type="protein sequence ID" value="CCH57381.3"/>
    <property type="molecule type" value="mRNA"/>
</dbReference>
<dbReference type="SMR" id="L8BRS3"/>
<dbReference type="GO" id="GO:0048046">
    <property type="term" value="C:apoplast"/>
    <property type="evidence" value="ECO:0007669"/>
    <property type="project" value="UniProtKB-SubCell"/>
</dbReference>
<dbReference type="GO" id="GO:0030145">
    <property type="term" value="F:manganese ion binding"/>
    <property type="evidence" value="ECO:0007669"/>
    <property type="project" value="InterPro"/>
</dbReference>
<dbReference type="GO" id="GO:0050832">
    <property type="term" value="P:defense response to fungus"/>
    <property type="evidence" value="ECO:0000314"/>
    <property type="project" value="UniProtKB"/>
</dbReference>
<dbReference type="GO" id="GO:0050829">
    <property type="term" value="P:defense response to Gram-negative bacterium"/>
    <property type="evidence" value="ECO:0000314"/>
    <property type="project" value="UniProtKB"/>
</dbReference>
<dbReference type="GO" id="GO:0050830">
    <property type="term" value="P:defense response to Gram-positive bacterium"/>
    <property type="evidence" value="ECO:0000314"/>
    <property type="project" value="UniProtKB"/>
</dbReference>
<dbReference type="GO" id="GO:0031640">
    <property type="term" value="P:killing of cells of another organism"/>
    <property type="evidence" value="ECO:0007669"/>
    <property type="project" value="UniProtKB-KW"/>
</dbReference>
<dbReference type="CDD" id="cd02241">
    <property type="entry name" value="cupin_OxOx"/>
    <property type="match status" value="1"/>
</dbReference>
<dbReference type="FunFam" id="2.60.120.10:FF:000047">
    <property type="entry name" value="Auxin-binding protein ABP19a"/>
    <property type="match status" value="1"/>
</dbReference>
<dbReference type="Gene3D" id="2.60.120.10">
    <property type="entry name" value="Jelly Rolls"/>
    <property type="match status" value="1"/>
</dbReference>
<dbReference type="InterPro" id="IPR006045">
    <property type="entry name" value="Cupin_1"/>
</dbReference>
<dbReference type="InterPro" id="IPR001929">
    <property type="entry name" value="Germin"/>
</dbReference>
<dbReference type="InterPro" id="IPR019780">
    <property type="entry name" value="Germin_Mn-BS"/>
</dbReference>
<dbReference type="InterPro" id="IPR014710">
    <property type="entry name" value="RmlC-like_jellyroll"/>
</dbReference>
<dbReference type="InterPro" id="IPR011051">
    <property type="entry name" value="RmlC_Cupin_sf"/>
</dbReference>
<dbReference type="PANTHER" id="PTHR31238">
    <property type="entry name" value="GERMIN-LIKE PROTEIN SUBFAMILY 3 MEMBER 3"/>
    <property type="match status" value="1"/>
</dbReference>
<dbReference type="Pfam" id="PF00190">
    <property type="entry name" value="Cupin_1"/>
    <property type="match status" value="1"/>
</dbReference>
<dbReference type="PRINTS" id="PR00325">
    <property type="entry name" value="GERMIN"/>
</dbReference>
<dbReference type="SMART" id="SM00835">
    <property type="entry name" value="Cupin_1"/>
    <property type="match status" value="1"/>
</dbReference>
<dbReference type="SUPFAM" id="SSF51182">
    <property type="entry name" value="RmlC-like cupins"/>
    <property type="match status" value="1"/>
</dbReference>
<dbReference type="PROSITE" id="PS00725">
    <property type="entry name" value="GERMIN"/>
    <property type="match status" value="1"/>
</dbReference>
<reference evidence="6 7" key="1">
    <citation type="journal article" date="2012" name="PLoS ONE">
        <title>Molecular cloning and characterization of novel Morus alba germin-like protein gene which encodes for a silkworm gut digestion-resistant antimicrobial protein.</title>
        <authorList>
            <person name="Patnaik B.B."/>
            <person name="Kim D.H."/>
            <person name="Oh S.H."/>
            <person name="Song Y.S."/>
            <person name="Chanh N.D."/>
            <person name="Kim J.S."/>
            <person name="Jung W.J."/>
            <person name="Saha A.K."/>
            <person name="Bindroo B.B."/>
            <person name="Han Y.S."/>
        </authorList>
    </citation>
    <scope>NUCLEOTIDE SEQUENCE [MRNA]</scope>
    <scope>PROTEIN SEQUENCE OF 19-36</scope>
    <scope>FUNCTION</scope>
    <scope>BIOPHYSICOCHEMICAL PROPERTIES</scope>
    <scope>MASS SPECTROMETRY</scope>
    <source>
        <tissue evidence="7">Leaf</tissue>
    </source>
</reference>
<evidence type="ECO:0000250" key="1">
    <source>
        <dbReference type="UniProtKB" id="P45850"/>
    </source>
</evidence>
<evidence type="ECO:0000250" key="2">
    <source>
        <dbReference type="UniProtKB" id="P94072"/>
    </source>
</evidence>
<evidence type="ECO:0000255" key="3"/>
<evidence type="ECO:0000269" key="4">
    <source>
    </source>
</evidence>
<evidence type="ECO:0000303" key="5">
    <source>
    </source>
</evidence>
<evidence type="ECO:0000305" key="6"/>
<evidence type="ECO:0000312" key="7">
    <source>
        <dbReference type="EMBL" id="CCH57381.3"/>
    </source>
</evidence>
<feature type="signal peptide" evidence="4">
    <location>
        <begin position="1"/>
        <end position="18"/>
    </location>
</feature>
<feature type="chain" id="PRO_0000422700" description="Germin-like protein" evidence="4">
    <location>
        <begin position="19"/>
        <end position="209"/>
    </location>
</feature>
<feature type="domain" description="Cupin type-1" evidence="3">
    <location>
        <begin position="53"/>
        <end position="199"/>
    </location>
</feature>
<feature type="binding site" evidence="1">
    <location>
        <position position="101"/>
    </location>
    <ligand>
        <name>Mn(2+)</name>
        <dbReference type="ChEBI" id="CHEBI:29035"/>
    </ligand>
</feature>
<feature type="binding site" evidence="1">
    <location>
        <position position="103"/>
    </location>
    <ligand>
        <name>Mn(2+)</name>
        <dbReference type="ChEBI" id="CHEBI:29035"/>
    </ligand>
</feature>
<feature type="binding site" evidence="1">
    <location>
        <position position="108"/>
    </location>
    <ligand>
        <name>Mn(2+)</name>
        <dbReference type="ChEBI" id="CHEBI:29035"/>
    </ligand>
</feature>
<feature type="binding site" evidence="1">
    <location>
        <position position="147"/>
    </location>
    <ligand>
        <name>Mn(2+)</name>
        <dbReference type="ChEBI" id="CHEBI:29035"/>
    </ligand>
</feature>
<feature type="glycosylation site" description="N-linked (GlcNAc...) asparagine" evidence="3">
    <location>
        <position position="60"/>
    </location>
</feature>
<feature type="disulfide bond" evidence="1">
    <location>
        <begin position="24"/>
        <end position="39"/>
    </location>
</feature>